<dbReference type="EC" id="3.5.1.5" evidence="1"/>
<dbReference type="EMBL" id="L25079">
    <property type="protein sequence ID" value="AAA65722.1"/>
    <property type="molecule type" value="Genomic_DNA"/>
</dbReference>
<dbReference type="SMR" id="P42822"/>
<dbReference type="UniPathway" id="UPA00258">
    <property type="reaction ID" value="UER00370"/>
</dbReference>
<dbReference type="GO" id="GO:0035550">
    <property type="term" value="C:urease complex"/>
    <property type="evidence" value="ECO:0007669"/>
    <property type="project" value="InterPro"/>
</dbReference>
<dbReference type="GO" id="GO:0016151">
    <property type="term" value="F:nickel cation binding"/>
    <property type="evidence" value="ECO:0007669"/>
    <property type="project" value="InterPro"/>
</dbReference>
<dbReference type="GO" id="GO:0009039">
    <property type="term" value="F:urease activity"/>
    <property type="evidence" value="ECO:0007669"/>
    <property type="project" value="UniProtKB-UniRule"/>
</dbReference>
<dbReference type="GO" id="GO:0043419">
    <property type="term" value="P:urea catabolic process"/>
    <property type="evidence" value="ECO:0007669"/>
    <property type="project" value="UniProtKB-UniRule"/>
</dbReference>
<dbReference type="CDD" id="cd00407">
    <property type="entry name" value="Urease_beta"/>
    <property type="match status" value="1"/>
</dbReference>
<dbReference type="CDD" id="cd00390">
    <property type="entry name" value="Urease_gamma"/>
    <property type="match status" value="1"/>
</dbReference>
<dbReference type="FunFam" id="3.30.280.10:FF:000001">
    <property type="entry name" value="Urease subunit alpha"/>
    <property type="match status" value="1"/>
</dbReference>
<dbReference type="FunFam" id="2.10.150.10:FF:000001">
    <property type="entry name" value="Urease subunit beta"/>
    <property type="match status" value="1"/>
</dbReference>
<dbReference type="Gene3D" id="2.10.150.10">
    <property type="entry name" value="Urease, beta subunit"/>
    <property type="match status" value="1"/>
</dbReference>
<dbReference type="Gene3D" id="3.30.280.10">
    <property type="entry name" value="Urease, gamma-like subunit"/>
    <property type="match status" value="1"/>
</dbReference>
<dbReference type="HAMAP" id="MF_01954">
    <property type="entry name" value="Urease_beta"/>
    <property type="match status" value="1"/>
</dbReference>
<dbReference type="HAMAP" id="MF_01955">
    <property type="entry name" value="Urease_beta_gamma"/>
    <property type="match status" value="1"/>
</dbReference>
<dbReference type="InterPro" id="IPR002019">
    <property type="entry name" value="Urease_beta-like"/>
</dbReference>
<dbReference type="InterPro" id="IPR036461">
    <property type="entry name" value="Urease_betasu_sf"/>
</dbReference>
<dbReference type="InterPro" id="IPR008223">
    <property type="entry name" value="Urease_gamma-beta_su"/>
</dbReference>
<dbReference type="InterPro" id="IPR002026">
    <property type="entry name" value="Urease_gamma/gamma-beta_su"/>
</dbReference>
<dbReference type="InterPro" id="IPR036463">
    <property type="entry name" value="Urease_gamma_sf"/>
</dbReference>
<dbReference type="InterPro" id="IPR050069">
    <property type="entry name" value="Urease_subunit"/>
</dbReference>
<dbReference type="NCBIfam" id="NF009671">
    <property type="entry name" value="PRK13192.1"/>
    <property type="match status" value="1"/>
</dbReference>
<dbReference type="NCBIfam" id="NF009682">
    <property type="entry name" value="PRK13203.1"/>
    <property type="match status" value="1"/>
</dbReference>
<dbReference type="NCBIfam" id="NF009712">
    <property type="entry name" value="PRK13241.1"/>
    <property type="match status" value="1"/>
</dbReference>
<dbReference type="NCBIfam" id="NF010592">
    <property type="entry name" value="PRK13986.1"/>
    <property type="match status" value="1"/>
</dbReference>
<dbReference type="NCBIfam" id="TIGR00192">
    <property type="entry name" value="urease_beta"/>
    <property type="match status" value="1"/>
</dbReference>
<dbReference type="NCBIfam" id="TIGR00193">
    <property type="entry name" value="urease_gam"/>
    <property type="match status" value="1"/>
</dbReference>
<dbReference type="PANTHER" id="PTHR33569">
    <property type="entry name" value="UREASE"/>
    <property type="match status" value="1"/>
</dbReference>
<dbReference type="PANTHER" id="PTHR33569:SF1">
    <property type="entry name" value="UREASE"/>
    <property type="match status" value="1"/>
</dbReference>
<dbReference type="Pfam" id="PF00699">
    <property type="entry name" value="Urease_beta"/>
    <property type="match status" value="1"/>
</dbReference>
<dbReference type="Pfam" id="PF00547">
    <property type="entry name" value="Urease_gamma"/>
    <property type="match status" value="1"/>
</dbReference>
<dbReference type="PIRSF" id="PIRSF001225">
    <property type="entry name" value="Urease_gammabeta"/>
    <property type="match status" value="1"/>
</dbReference>
<dbReference type="SUPFAM" id="SSF51278">
    <property type="entry name" value="Urease, beta-subunit"/>
    <property type="match status" value="1"/>
</dbReference>
<dbReference type="SUPFAM" id="SSF54111">
    <property type="entry name" value="Urease, gamma-subunit"/>
    <property type="match status" value="1"/>
</dbReference>
<keyword id="KW-0963">Cytoplasm</keyword>
<keyword id="KW-0378">Hydrolase</keyword>
<organism>
    <name type="scientific">Helicobacter heilmannii</name>
    <dbReference type="NCBI Taxonomy" id="35817"/>
    <lineage>
        <taxon>Bacteria</taxon>
        <taxon>Pseudomonadati</taxon>
        <taxon>Campylobacterota</taxon>
        <taxon>Epsilonproteobacteria</taxon>
        <taxon>Campylobacterales</taxon>
        <taxon>Helicobacteraceae</taxon>
        <taxon>Helicobacter</taxon>
    </lineage>
</organism>
<gene>
    <name evidence="1" type="primary">ureA</name>
</gene>
<comment type="catalytic activity">
    <reaction evidence="1">
        <text>urea + 2 H2O + H(+) = hydrogencarbonate + 2 NH4(+)</text>
        <dbReference type="Rhea" id="RHEA:20557"/>
        <dbReference type="ChEBI" id="CHEBI:15377"/>
        <dbReference type="ChEBI" id="CHEBI:15378"/>
        <dbReference type="ChEBI" id="CHEBI:16199"/>
        <dbReference type="ChEBI" id="CHEBI:17544"/>
        <dbReference type="ChEBI" id="CHEBI:28938"/>
        <dbReference type="EC" id="3.5.1.5"/>
    </reaction>
</comment>
<comment type="pathway">
    <text evidence="1">Nitrogen metabolism; urea degradation; CO(2) and NH(3) from urea (urease route): step 1/1.</text>
</comment>
<comment type="subunit">
    <text evidence="1">Heterohexamer of 3 UreA (alpha) and 3 UreB (beta) subunits.</text>
</comment>
<comment type="subcellular location">
    <subcellularLocation>
        <location evidence="1">Cytoplasm</location>
    </subcellularLocation>
</comment>
<comment type="similarity">
    <text evidence="1">In the N-terminal section; belongs to the urease gamma subunit family.</text>
</comment>
<comment type="similarity">
    <text evidence="1">In the C-terminal section; belongs to the urease beta subunit family.</text>
</comment>
<comment type="caution">
    <text evidence="2">The orthologous protein is known as the gamma/beta subunit (UreAB) in most other bacteria.</text>
</comment>
<accession>P42822</accession>
<feature type="chain" id="PRO_0000098071" description="Urease subunit alpha">
    <location>
        <begin position="1"/>
        <end position="234"/>
    </location>
</feature>
<feature type="region of interest" description="Urease gamma">
    <location>
        <begin position="1"/>
        <end position="102"/>
    </location>
</feature>
<feature type="region of interest" description="Urease beta">
    <location>
        <begin position="103"/>
        <end position="234"/>
    </location>
</feature>
<evidence type="ECO:0000255" key="1">
    <source>
        <dbReference type="HAMAP-Rule" id="MF_01955"/>
    </source>
</evidence>
<evidence type="ECO:0000305" key="2"/>
<name>URE23_HELHE</name>
<proteinExistence type="inferred from homology"/>
<reference key="1">
    <citation type="journal article" date="1994" name="Infect. Immun.">
        <title>Molecular analysis of urease genes from a newly identified uncultured species of Helicobacter.</title>
        <authorList>
            <person name="Solnick J.V."/>
            <person name="O'Rourke J."/>
            <person name="Lee A."/>
            <person name="Tompkins L.S."/>
        </authorList>
    </citation>
    <scope>NUCLEOTIDE SEQUENCE [GENOMIC DNA]</scope>
    <source>
        <strain>2</strain>
    </source>
</reference>
<sequence>MKLTPKELDKLMLHYAGELAKQRKAKGIKLNYTEAVALISAHVMEEARAGKKSVADLMQEGRTLLKADDVMPGVAHMIHEVGIEAGFPDGTKLVTIHTPVEAGSDKLAPGEVILKNEDITLNAGKHAVQLKVKNKGDRPVQVGSHFHFFEVNKLLDFDREKAYGKRLDIASGTAVRFEPGEEKTVELIDIGGNKRIYGFNALVDRQADHDGKKLALKRAKEKHFGTINCGCDNK</sequence>
<protein>
    <recommendedName>
        <fullName evidence="1">Urease subunit alpha</fullName>
        <ecNumber evidence="1">3.5.1.5</ecNumber>
    </recommendedName>
    <alternativeName>
        <fullName evidence="1">Urea amidohydrolase subunit alpha</fullName>
    </alternativeName>
</protein>